<proteinExistence type="evidence at transcript level"/>
<comment type="function">
    <text evidence="1 3">Lipid transferase specifically expressed in white adipose tissue, which promotes unilocular lipid droplet formation by mediating lipid droplet fusion. Lipid droplet fusion promotes their enlargement, restricting lipolysis and favoring lipid storage. Localizes on the lipid droplet surface, at focal contact sites between lipid droplets, and mediates atypical lipid droplet fusion by undergoing liquid-liquid phase separation (LLPS) and promoting directional net neutral lipid transfer from the smaller to larger lipid droplets. The transfer direction may be driven by the internal pressure difference between the contacting lipid droplet pair. Its role in neutral lipid transfer and lipid droplet enlargement is activated by the interaction with PLIN1. May also act as a CEBPB coactivator in the white adipose tissue to control the expression of a subset of CEBPB downstream target genes, including SOCS1, SOCS3, TGFB1, TGFBR1, ID2 and XDH (By similarity). When overexpressed in preadipocytes, induces apoptosis or increases cell susceptibility to apoptosis induced by serum deprivation or TGFB treatment (By similarity).</text>
</comment>
<comment type="catalytic activity">
    <reaction evidence="1">
        <text>a triacyl-sn-glycerol(in) = a triacyl-sn-glycerol(out)</text>
        <dbReference type="Rhea" id="RHEA:39011"/>
        <dbReference type="ChEBI" id="CHEBI:64615"/>
    </reaction>
</comment>
<comment type="subunit">
    <text evidence="1 2 3">Homodimer. Homooligomer; undergoes liquid-liquid phase separation (LLPS) via its N-terminus, facilitating lipid droplet fusion, occurs at the lipid droplet contact sites (By similarity). Interacts with CIDEA (By similarity). Interacts with PLIN1 (By similarity). Interacts with NFAT5; this interaction is direct and retains NFAT5 in the cytoplasm (By similarity). Interacts with CEBPB. Interacts with isoform CLSTN3beta of CLSTN3; inhibiting the lipid transferase activity of CIDEC (By similarity).</text>
</comment>
<comment type="subcellular location">
    <subcellularLocation>
        <location evidence="1">Lipid droplet</location>
    </subcellularLocation>
    <subcellularLocation>
        <location evidence="1">Endoplasmic reticulum</location>
    </subcellularLocation>
    <subcellularLocation>
        <location evidence="1">Nucleus</location>
    </subcellularLocation>
    <text evidence="1">Diffuses quickly on lipid droplet surface, but becomes trapped and clustered at lipid droplet contact sites, thereby enabling its rapid enrichment at lipid droplet contact sites.</text>
</comment>
<comment type="domain">
    <text evidence="1">The CIDE-N domain is involved in homodimerization which is crucial for its function in promoting lipid exchange and transfer.</text>
</comment>
<comment type="PTM">
    <text evidence="1">Ubiquitinated and targeted to proteasomal degradation, resulting in a short half-life (about 15 minutes in 3T3-L1 cells). Protein stability depends on triaclyglycerol synthesis, fatty acid availability and lipid droplet formation.</text>
</comment>
<comment type="similarity">
    <text evidence="6">Belongs to the CIDE family.</text>
</comment>
<protein>
    <recommendedName>
        <fullName evidence="6">Lipid transferase CIDEC</fullName>
    </recommendedName>
    <alternativeName>
        <fullName evidence="6">Cell death-inducing DFFA-like effector protein C</fullName>
    </alternativeName>
</protein>
<dbReference type="EMBL" id="DAAA02053757">
    <property type="status" value="NOT_ANNOTATED_CDS"/>
    <property type="molecule type" value="Genomic_DNA"/>
</dbReference>
<dbReference type="EMBL" id="BC116135">
    <property type="protein sequence ID" value="AAI16136.1"/>
    <property type="molecule type" value="mRNA"/>
</dbReference>
<dbReference type="RefSeq" id="NP_001069499.1">
    <property type="nucleotide sequence ID" value="NM_001076031.1"/>
</dbReference>
<dbReference type="SMR" id="F1MN90"/>
<dbReference type="FunCoup" id="F1MN90">
    <property type="interactions" value="23"/>
</dbReference>
<dbReference type="STRING" id="9913.ENSBTAP00000058930"/>
<dbReference type="PaxDb" id="9913-ENSBTAP00000010479"/>
<dbReference type="GeneID" id="534607"/>
<dbReference type="KEGG" id="bta:534607"/>
<dbReference type="CTD" id="63924"/>
<dbReference type="eggNOG" id="ENOG502QU28">
    <property type="taxonomic scope" value="Eukaryota"/>
</dbReference>
<dbReference type="HOGENOM" id="CLU_090011_0_0_1"/>
<dbReference type="InParanoid" id="F1MN90"/>
<dbReference type="OrthoDB" id="6475906at2759"/>
<dbReference type="TreeFam" id="TF334321"/>
<dbReference type="Proteomes" id="UP000009136">
    <property type="component" value="Unplaced"/>
</dbReference>
<dbReference type="GO" id="GO:0005829">
    <property type="term" value="C:cytosol"/>
    <property type="evidence" value="ECO:0000250"/>
    <property type="project" value="AgBase"/>
</dbReference>
<dbReference type="GO" id="GO:0005783">
    <property type="term" value="C:endoplasmic reticulum"/>
    <property type="evidence" value="ECO:0007669"/>
    <property type="project" value="UniProtKB-SubCell"/>
</dbReference>
<dbReference type="GO" id="GO:0005811">
    <property type="term" value="C:lipid droplet"/>
    <property type="evidence" value="ECO:0000250"/>
    <property type="project" value="UniProtKB"/>
</dbReference>
<dbReference type="GO" id="GO:0005634">
    <property type="term" value="C:nucleus"/>
    <property type="evidence" value="ECO:0007669"/>
    <property type="project" value="UniProtKB-SubCell"/>
</dbReference>
<dbReference type="GO" id="GO:0120013">
    <property type="term" value="F:lipid transfer activity"/>
    <property type="evidence" value="ECO:0000250"/>
    <property type="project" value="UniProtKB"/>
</dbReference>
<dbReference type="GO" id="GO:0140693">
    <property type="term" value="F:molecular condensate scaffold activity"/>
    <property type="evidence" value="ECO:0000250"/>
    <property type="project" value="UniProtKB"/>
</dbReference>
<dbReference type="GO" id="GO:0070300">
    <property type="term" value="F:phosphatidic acid binding"/>
    <property type="evidence" value="ECO:0000250"/>
    <property type="project" value="UniProtKB"/>
</dbReference>
<dbReference type="GO" id="GO:0097194">
    <property type="term" value="P:execution phase of apoptosis"/>
    <property type="evidence" value="ECO:0000250"/>
    <property type="project" value="AgBase"/>
</dbReference>
<dbReference type="GO" id="GO:0160077">
    <property type="term" value="P:lipid droplet fusion"/>
    <property type="evidence" value="ECO:0000250"/>
    <property type="project" value="UniProtKB"/>
</dbReference>
<dbReference type="GO" id="GO:0034389">
    <property type="term" value="P:lipid droplet organization"/>
    <property type="evidence" value="ECO:0000250"/>
    <property type="project" value="AgBase"/>
</dbReference>
<dbReference type="GO" id="GO:0019915">
    <property type="term" value="P:lipid storage"/>
    <property type="evidence" value="ECO:0000250"/>
    <property type="project" value="UniProtKB"/>
</dbReference>
<dbReference type="GO" id="GO:0050995">
    <property type="term" value="P:negative regulation of lipid catabolic process"/>
    <property type="evidence" value="ECO:0000250"/>
    <property type="project" value="UniProtKB"/>
</dbReference>
<dbReference type="GO" id="GO:0090209">
    <property type="term" value="P:negative regulation of triglyceride metabolic process"/>
    <property type="evidence" value="ECO:0000250"/>
    <property type="project" value="UniProtKB"/>
</dbReference>
<dbReference type="GO" id="GO:0042981">
    <property type="term" value="P:regulation of apoptotic process"/>
    <property type="evidence" value="ECO:0000318"/>
    <property type="project" value="GO_Central"/>
</dbReference>
<dbReference type="FunFam" id="3.10.20.10:FF:000004">
    <property type="entry name" value="cell death activator CIDE-3 isoform X1"/>
    <property type="match status" value="1"/>
</dbReference>
<dbReference type="Gene3D" id="3.10.20.10">
    <property type="match status" value="1"/>
</dbReference>
<dbReference type="InterPro" id="IPR003508">
    <property type="entry name" value="CIDE-N_dom"/>
</dbReference>
<dbReference type="PANTHER" id="PTHR12306">
    <property type="entry name" value="CELL DEATH ACTIVATOR CIDE"/>
    <property type="match status" value="1"/>
</dbReference>
<dbReference type="PANTHER" id="PTHR12306:SF9">
    <property type="entry name" value="LIPID TRANSFERASE CIDEC"/>
    <property type="match status" value="1"/>
</dbReference>
<dbReference type="Pfam" id="PF02017">
    <property type="entry name" value="CIDE-N"/>
    <property type="match status" value="1"/>
</dbReference>
<dbReference type="SMART" id="SM00266">
    <property type="entry name" value="CAD"/>
    <property type="match status" value="1"/>
</dbReference>
<dbReference type="SUPFAM" id="SSF54277">
    <property type="entry name" value="CAD &amp; PB1 domains"/>
    <property type="match status" value="1"/>
</dbReference>
<dbReference type="PROSITE" id="PS51135">
    <property type="entry name" value="CIDE_N"/>
    <property type="match status" value="1"/>
</dbReference>
<organism>
    <name type="scientific">Bos taurus</name>
    <name type="common">Bovine</name>
    <dbReference type="NCBI Taxonomy" id="9913"/>
    <lineage>
        <taxon>Eukaryota</taxon>
        <taxon>Metazoa</taxon>
        <taxon>Chordata</taxon>
        <taxon>Craniata</taxon>
        <taxon>Vertebrata</taxon>
        <taxon>Euteleostomi</taxon>
        <taxon>Mammalia</taxon>
        <taxon>Eutheria</taxon>
        <taxon>Laurasiatheria</taxon>
        <taxon>Artiodactyla</taxon>
        <taxon>Ruminantia</taxon>
        <taxon>Pecora</taxon>
        <taxon>Bovidae</taxon>
        <taxon>Bovinae</taxon>
        <taxon>Bos</taxon>
    </lineage>
</organism>
<evidence type="ECO:0000250" key="1">
    <source>
        <dbReference type="UniProtKB" id="P56198"/>
    </source>
</evidence>
<evidence type="ECO:0000250" key="2">
    <source>
        <dbReference type="UniProtKB" id="Q5XI33"/>
    </source>
</evidence>
<evidence type="ECO:0000250" key="3">
    <source>
        <dbReference type="UniProtKB" id="Q96AQ7"/>
    </source>
</evidence>
<evidence type="ECO:0000255" key="4">
    <source>
        <dbReference type="PROSITE-ProRule" id="PRU00447"/>
    </source>
</evidence>
<evidence type="ECO:0000256" key="5">
    <source>
        <dbReference type="SAM" id="MobiDB-lite"/>
    </source>
</evidence>
<evidence type="ECO:0000305" key="6"/>
<reference key="1">
    <citation type="journal article" date="2009" name="Genome Biol.">
        <title>A whole-genome assembly of the domestic cow, Bos taurus.</title>
        <authorList>
            <person name="Zimin A.V."/>
            <person name="Delcher A.L."/>
            <person name="Florea L."/>
            <person name="Kelley D.R."/>
            <person name="Schatz M.C."/>
            <person name="Puiu D."/>
            <person name="Hanrahan F."/>
            <person name="Pertea G."/>
            <person name="Van Tassell C.P."/>
            <person name="Sonstegard T.S."/>
            <person name="Marcais G."/>
            <person name="Roberts M."/>
            <person name="Subramanian P."/>
            <person name="Yorke J.A."/>
            <person name="Salzberg S.L."/>
        </authorList>
    </citation>
    <scope>NUCLEOTIDE SEQUENCE [LARGE SCALE GENOMIC DNA]</scope>
    <source>
        <strain>Hereford</strain>
    </source>
</reference>
<reference key="2">
    <citation type="submission" date="2006-05" db="EMBL/GenBank/DDBJ databases">
        <authorList>
            <consortium name="NIH - Mammalian Gene Collection (MGC) project"/>
        </authorList>
    </citation>
    <scope>NUCLEOTIDE SEQUENCE [LARGE SCALE MRNA]</scope>
    <source>
        <strain>Hereford</strain>
        <tissue>Fetal ascending colon</tissue>
    </source>
</reference>
<keyword id="KW-0010">Activator</keyword>
<keyword id="KW-0053">Apoptosis</keyword>
<keyword id="KW-0256">Endoplasmic reticulum</keyword>
<keyword id="KW-0551">Lipid droplet</keyword>
<keyword id="KW-0445">Lipid transport</keyword>
<keyword id="KW-0539">Nucleus</keyword>
<keyword id="KW-1185">Reference proteome</keyword>
<keyword id="KW-0804">Transcription</keyword>
<keyword id="KW-0805">Transcription regulation</keyword>
<keyword id="KW-0813">Transport</keyword>
<keyword id="KW-0832">Ubl conjugation</keyword>
<accession>F1MN90</accession>
<accession>Q1LZ93</accession>
<sequence>MAMYTAVSTSVVTQQQLSEPSAEAPRARPCRVTTADRSVRKGIMVHSLEDLHVKVRDTLMLAYKPFFLVLEEDGTTVETEEYFQSLADDTVFMVLHKGQKWQPPSEQSTRYQLALSHKPAKIDVARVTFDLYKVNPQDFIGCLNVKATLYGTYSVSYDLHCSGAKRIMKEALRWALFSMRTTGHMLLGTSCYLQQLLDATEREQPPKSKAASLIPTSLKMLQ</sequence>
<name>CIDEC_BOVIN</name>
<feature type="chain" id="PRO_0000419720" description="Lipid transferase CIDEC">
    <location>
        <begin position="1"/>
        <end position="222"/>
    </location>
</feature>
<feature type="domain" description="CIDE-N" evidence="4">
    <location>
        <begin position="26"/>
        <end position="103"/>
    </location>
</feature>
<feature type="region of interest" description="Disordered" evidence="5">
    <location>
        <begin position="1"/>
        <end position="33"/>
    </location>
</feature>
<feature type="region of interest" description="Required for liquid-liquid phase separation (LLPS)" evidence="1">
    <location>
        <begin position="1"/>
        <end position="33"/>
    </location>
</feature>
<feature type="region of interest" description="Disordered" evidence="5">
    <location>
        <begin position="203"/>
        <end position="222"/>
    </location>
</feature>
<feature type="compositionally biased region" description="Polar residues" evidence="5">
    <location>
        <begin position="1"/>
        <end position="19"/>
    </location>
</feature>
<feature type="sequence conflict" description="In Ref. 2; AAI16136." evidence="6" ref="2">
    <original>R</original>
    <variation>Q</variation>
    <location>
        <position position="56"/>
    </location>
</feature>
<feature type="sequence conflict" description="In Ref. 2; AAI16136." evidence="6" ref="2">
    <original>K</original>
    <variation>R</variation>
    <location>
        <position position="64"/>
    </location>
</feature>
<feature type="sequence conflict" description="In Ref. 2; AAI16136." evidence="6" ref="2">
    <original>R</original>
    <variation>Q</variation>
    <location>
        <position position="126"/>
    </location>
</feature>
<gene>
    <name evidence="1" type="primary">CIDEC</name>
</gene>